<reference key="1">
    <citation type="journal article" date="2009" name="Proc. Natl. Acad. Sci. U.S.A.">
        <title>Characterizing a model human gut microbiota composed of members of its two dominant bacterial phyla.</title>
        <authorList>
            <person name="Mahowald M.A."/>
            <person name="Rey F.E."/>
            <person name="Seedorf H."/>
            <person name="Turnbaugh P.J."/>
            <person name="Fulton R.S."/>
            <person name="Wollam A."/>
            <person name="Shah N."/>
            <person name="Wang C."/>
            <person name="Magrini V."/>
            <person name="Wilson R.K."/>
            <person name="Cantarel B.L."/>
            <person name="Coutinho P.M."/>
            <person name="Henrissat B."/>
            <person name="Crock L.W."/>
            <person name="Russell A."/>
            <person name="Verberkmoes N.C."/>
            <person name="Hettich R.L."/>
            <person name="Gordon J.I."/>
        </authorList>
    </citation>
    <scope>NUCLEOTIDE SEQUENCE [LARGE SCALE GENOMIC DNA]</scope>
    <source>
        <strain>ATCC 27750 / DSM 3376 / VPI C15-48 / C15-B4</strain>
    </source>
</reference>
<gene>
    <name evidence="1" type="primary">ybeY</name>
    <name type="ordered locus">EUBELI_00972</name>
</gene>
<organism>
    <name type="scientific">Lachnospira eligens (strain ATCC 27750 / DSM 3376 / VPI C15-48 / C15-B4)</name>
    <name type="common">Eubacterium eligens</name>
    <dbReference type="NCBI Taxonomy" id="515620"/>
    <lineage>
        <taxon>Bacteria</taxon>
        <taxon>Bacillati</taxon>
        <taxon>Bacillota</taxon>
        <taxon>Clostridia</taxon>
        <taxon>Lachnospirales</taxon>
        <taxon>Lachnospiraceae</taxon>
        <taxon>Lachnospira</taxon>
    </lineage>
</organism>
<protein>
    <recommendedName>
        <fullName evidence="1">Endoribonuclease YbeY</fullName>
        <ecNumber evidence="1">3.1.-.-</ecNumber>
    </recommendedName>
</protein>
<accession>C4Z060</accession>
<proteinExistence type="inferred from homology"/>
<feature type="chain" id="PRO_1000201734" description="Endoribonuclease YbeY">
    <location>
        <begin position="1"/>
        <end position="169"/>
    </location>
</feature>
<feature type="binding site" evidence="1">
    <location>
        <position position="135"/>
    </location>
    <ligand>
        <name>Zn(2+)</name>
        <dbReference type="ChEBI" id="CHEBI:29105"/>
        <note>catalytic</note>
    </ligand>
</feature>
<feature type="binding site" evidence="1">
    <location>
        <position position="139"/>
    </location>
    <ligand>
        <name>Zn(2+)</name>
        <dbReference type="ChEBI" id="CHEBI:29105"/>
        <note>catalytic</note>
    </ligand>
</feature>
<feature type="binding site" evidence="1">
    <location>
        <position position="145"/>
    </location>
    <ligand>
        <name>Zn(2+)</name>
        <dbReference type="ChEBI" id="CHEBI:29105"/>
        <note>catalytic</note>
    </ligand>
</feature>
<name>YBEY_LACE2</name>
<keyword id="KW-0963">Cytoplasm</keyword>
<keyword id="KW-0255">Endonuclease</keyword>
<keyword id="KW-0378">Hydrolase</keyword>
<keyword id="KW-0479">Metal-binding</keyword>
<keyword id="KW-0540">Nuclease</keyword>
<keyword id="KW-1185">Reference proteome</keyword>
<keyword id="KW-0690">Ribosome biogenesis</keyword>
<keyword id="KW-0698">rRNA processing</keyword>
<keyword id="KW-0862">Zinc</keyword>
<dbReference type="EC" id="3.1.-.-" evidence="1"/>
<dbReference type="EMBL" id="CP001104">
    <property type="protein sequence ID" value="ACR71973.1"/>
    <property type="molecule type" value="Genomic_DNA"/>
</dbReference>
<dbReference type="RefSeq" id="WP_012739208.1">
    <property type="nucleotide sequence ID" value="NC_012778.1"/>
</dbReference>
<dbReference type="SMR" id="C4Z060"/>
<dbReference type="STRING" id="515620.EUBELI_00972"/>
<dbReference type="GeneID" id="41355700"/>
<dbReference type="KEGG" id="eel:EUBELI_00972"/>
<dbReference type="eggNOG" id="COG0319">
    <property type="taxonomic scope" value="Bacteria"/>
</dbReference>
<dbReference type="HOGENOM" id="CLU_106710_3_0_9"/>
<dbReference type="Proteomes" id="UP000001476">
    <property type="component" value="Chromosome"/>
</dbReference>
<dbReference type="GO" id="GO:0005737">
    <property type="term" value="C:cytoplasm"/>
    <property type="evidence" value="ECO:0007669"/>
    <property type="project" value="UniProtKB-SubCell"/>
</dbReference>
<dbReference type="GO" id="GO:0004222">
    <property type="term" value="F:metalloendopeptidase activity"/>
    <property type="evidence" value="ECO:0007669"/>
    <property type="project" value="InterPro"/>
</dbReference>
<dbReference type="GO" id="GO:0004521">
    <property type="term" value="F:RNA endonuclease activity"/>
    <property type="evidence" value="ECO:0007669"/>
    <property type="project" value="UniProtKB-UniRule"/>
</dbReference>
<dbReference type="GO" id="GO:0008270">
    <property type="term" value="F:zinc ion binding"/>
    <property type="evidence" value="ECO:0007669"/>
    <property type="project" value="UniProtKB-UniRule"/>
</dbReference>
<dbReference type="GO" id="GO:0006364">
    <property type="term" value="P:rRNA processing"/>
    <property type="evidence" value="ECO:0007669"/>
    <property type="project" value="UniProtKB-UniRule"/>
</dbReference>
<dbReference type="Gene3D" id="3.40.390.30">
    <property type="entry name" value="Metalloproteases ('zincins'), catalytic domain"/>
    <property type="match status" value="1"/>
</dbReference>
<dbReference type="HAMAP" id="MF_00009">
    <property type="entry name" value="Endoribonucl_YbeY"/>
    <property type="match status" value="1"/>
</dbReference>
<dbReference type="InterPro" id="IPR023091">
    <property type="entry name" value="MetalPrtase_cat_dom_sf_prd"/>
</dbReference>
<dbReference type="InterPro" id="IPR002036">
    <property type="entry name" value="YbeY"/>
</dbReference>
<dbReference type="NCBIfam" id="TIGR00043">
    <property type="entry name" value="rRNA maturation RNase YbeY"/>
    <property type="match status" value="1"/>
</dbReference>
<dbReference type="PANTHER" id="PTHR46986">
    <property type="entry name" value="ENDORIBONUCLEASE YBEY, CHLOROPLASTIC"/>
    <property type="match status" value="1"/>
</dbReference>
<dbReference type="PANTHER" id="PTHR46986:SF1">
    <property type="entry name" value="ENDORIBONUCLEASE YBEY, CHLOROPLASTIC"/>
    <property type="match status" value="1"/>
</dbReference>
<dbReference type="Pfam" id="PF02130">
    <property type="entry name" value="YbeY"/>
    <property type="match status" value="1"/>
</dbReference>
<dbReference type="SUPFAM" id="SSF55486">
    <property type="entry name" value="Metalloproteases ('zincins'), catalytic domain"/>
    <property type="match status" value="1"/>
</dbReference>
<comment type="function">
    <text evidence="1">Single strand-specific metallo-endoribonuclease involved in late-stage 70S ribosome quality control and in maturation of the 3' terminus of the 16S rRNA.</text>
</comment>
<comment type="cofactor">
    <cofactor evidence="1">
        <name>Zn(2+)</name>
        <dbReference type="ChEBI" id="CHEBI:29105"/>
    </cofactor>
    <text evidence="1">Binds 1 zinc ion.</text>
</comment>
<comment type="subcellular location">
    <subcellularLocation>
        <location evidence="1">Cytoplasm</location>
    </subcellularLocation>
</comment>
<comment type="similarity">
    <text evidence="1">Belongs to the endoribonuclease YbeY family.</text>
</comment>
<evidence type="ECO:0000255" key="1">
    <source>
        <dbReference type="HAMAP-Rule" id="MF_00009"/>
    </source>
</evidence>
<sequence>MTINIEYEAEEKLDLDYEKIITDVVNEAVDYEKCPYEAEVNVTIVDSESIHEINKEYRNIDSPTDVLSFPGVNYVTPSDFDAIEDELENNAEDYFNPDTGELLLGDIVLCVQKIKEQADKYGHSEKRELAFLTAHSMMHLFGYDHMTPEESAVMEAKQNEVLERLGITR</sequence>